<protein>
    <recommendedName>
        <fullName evidence="1">Phosphatidylglycerol--prolipoprotein diacylglyceryl transferase</fullName>
        <ecNumber evidence="1">2.5.1.145</ecNumber>
    </recommendedName>
</protein>
<name>LGT_BORBZ</name>
<dbReference type="EC" id="2.5.1.145" evidence="1"/>
<dbReference type="EMBL" id="CP001205">
    <property type="protein sequence ID" value="ACK75102.1"/>
    <property type="molecule type" value="Genomic_DNA"/>
</dbReference>
<dbReference type="RefSeq" id="WP_002556957.1">
    <property type="nucleotide sequence ID" value="NC_011728.1"/>
</dbReference>
<dbReference type="SMR" id="B7J1T5"/>
<dbReference type="GeneID" id="56567790"/>
<dbReference type="KEGG" id="bbz:BbuZS7_0364"/>
<dbReference type="HOGENOM" id="CLU_013386_1_0_12"/>
<dbReference type="UniPathway" id="UPA00664"/>
<dbReference type="Proteomes" id="UP000006901">
    <property type="component" value="Chromosome"/>
</dbReference>
<dbReference type="GO" id="GO:0005886">
    <property type="term" value="C:plasma membrane"/>
    <property type="evidence" value="ECO:0007669"/>
    <property type="project" value="UniProtKB-SubCell"/>
</dbReference>
<dbReference type="GO" id="GO:0008961">
    <property type="term" value="F:phosphatidylglycerol-prolipoprotein diacylglyceryl transferase activity"/>
    <property type="evidence" value="ECO:0007669"/>
    <property type="project" value="UniProtKB-UniRule"/>
</dbReference>
<dbReference type="GO" id="GO:0042158">
    <property type="term" value="P:lipoprotein biosynthetic process"/>
    <property type="evidence" value="ECO:0007669"/>
    <property type="project" value="UniProtKB-UniRule"/>
</dbReference>
<dbReference type="HAMAP" id="MF_01147">
    <property type="entry name" value="Lgt"/>
    <property type="match status" value="1"/>
</dbReference>
<dbReference type="InterPro" id="IPR001640">
    <property type="entry name" value="Lgt"/>
</dbReference>
<dbReference type="NCBIfam" id="TIGR00544">
    <property type="entry name" value="lgt"/>
    <property type="match status" value="1"/>
</dbReference>
<dbReference type="PANTHER" id="PTHR30589:SF0">
    <property type="entry name" value="PHOSPHATIDYLGLYCEROL--PROLIPOPROTEIN DIACYLGLYCERYL TRANSFERASE"/>
    <property type="match status" value="1"/>
</dbReference>
<dbReference type="PANTHER" id="PTHR30589">
    <property type="entry name" value="PROLIPOPROTEIN DIACYLGLYCERYL TRANSFERASE"/>
    <property type="match status" value="1"/>
</dbReference>
<dbReference type="Pfam" id="PF01790">
    <property type="entry name" value="LGT"/>
    <property type="match status" value="1"/>
</dbReference>
<dbReference type="PROSITE" id="PS01311">
    <property type="entry name" value="LGT"/>
    <property type="match status" value="1"/>
</dbReference>
<accession>B7J1T5</accession>
<feature type="chain" id="PRO_1000137405" description="Phosphatidylglycerol--prolipoprotein diacylglyceryl transferase">
    <location>
        <begin position="1"/>
        <end position="328"/>
    </location>
</feature>
<feature type="transmembrane region" description="Helical" evidence="1">
    <location>
        <begin position="15"/>
        <end position="35"/>
    </location>
</feature>
<feature type="transmembrane region" description="Helical" evidence="1">
    <location>
        <begin position="57"/>
        <end position="77"/>
    </location>
</feature>
<feature type="transmembrane region" description="Helical" evidence="1">
    <location>
        <begin position="106"/>
        <end position="126"/>
    </location>
</feature>
<feature type="transmembrane region" description="Helical" evidence="1">
    <location>
        <begin position="242"/>
        <end position="262"/>
    </location>
</feature>
<feature type="transmembrane region" description="Helical" evidence="1">
    <location>
        <begin position="289"/>
        <end position="309"/>
    </location>
</feature>
<feature type="binding site" evidence="1">
    <location>
        <position position="156"/>
    </location>
    <ligand>
        <name>a 1,2-diacyl-sn-glycero-3-phospho-(1'-sn-glycerol)</name>
        <dbReference type="ChEBI" id="CHEBI:64716"/>
    </ligand>
</feature>
<gene>
    <name evidence="1" type="primary">lgt</name>
    <name type="ordered locus">BbuZS7_0364</name>
</gene>
<sequence length="328" mass="37609">MPNYINYPSWLHPEVIQGIPITWYSLSYILIILISYKFIWYQIQSDNVDIKKEDYEIFMFSLVLGAILGGRLASTLVYDKSGIYYSNPWLILLPFDQHWNFTGFRGMAIHGGFLGAIIAPLITINTKLKNTNVQKYFLKLTDYGSIAFSSGYILGRLANFANAELYGRVMKGGIIFPNAEPFDTNIPGVKEFASSVGLEISPHDLLINLPRIPSQLIEGFFEGPVTFLLLWFLFKKIKKYDGFIFGVYVMLYAFFRFFIEYLREPDKELGFIITYKPITSLSEFSFLNISMGQILSLTLMLSGLIWIIVTKKIADKKIKNNTNLAYKN</sequence>
<reference key="1">
    <citation type="journal article" date="2011" name="J. Bacteriol.">
        <title>Whole-genome sequences of thirteen isolates of Borrelia burgdorferi.</title>
        <authorList>
            <person name="Schutzer S.E."/>
            <person name="Fraser-Liggett C.M."/>
            <person name="Casjens S.R."/>
            <person name="Qiu W.G."/>
            <person name="Dunn J.J."/>
            <person name="Mongodin E.F."/>
            <person name="Luft B.J."/>
        </authorList>
    </citation>
    <scope>NUCLEOTIDE SEQUENCE [LARGE SCALE GENOMIC DNA]</scope>
    <source>
        <strain>ZS7</strain>
    </source>
</reference>
<evidence type="ECO:0000255" key="1">
    <source>
        <dbReference type="HAMAP-Rule" id="MF_01147"/>
    </source>
</evidence>
<keyword id="KW-0997">Cell inner membrane</keyword>
<keyword id="KW-1003">Cell membrane</keyword>
<keyword id="KW-0472">Membrane</keyword>
<keyword id="KW-0808">Transferase</keyword>
<keyword id="KW-0812">Transmembrane</keyword>
<keyword id="KW-1133">Transmembrane helix</keyword>
<proteinExistence type="inferred from homology"/>
<organism>
    <name type="scientific">Borreliella burgdorferi (strain ZS7)</name>
    <name type="common">Borrelia burgdorferi</name>
    <dbReference type="NCBI Taxonomy" id="445985"/>
    <lineage>
        <taxon>Bacteria</taxon>
        <taxon>Pseudomonadati</taxon>
        <taxon>Spirochaetota</taxon>
        <taxon>Spirochaetia</taxon>
        <taxon>Spirochaetales</taxon>
        <taxon>Borreliaceae</taxon>
        <taxon>Borreliella</taxon>
    </lineage>
</organism>
<comment type="function">
    <text evidence="1">Catalyzes the transfer of the diacylglyceryl group from phosphatidylglycerol to the sulfhydryl group of the N-terminal cysteine of a prolipoprotein, the first step in the formation of mature lipoproteins.</text>
</comment>
<comment type="catalytic activity">
    <reaction evidence="1">
        <text>L-cysteinyl-[prolipoprotein] + a 1,2-diacyl-sn-glycero-3-phospho-(1'-sn-glycerol) = an S-1,2-diacyl-sn-glyceryl-L-cysteinyl-[prolipoprotein] + sn-glycerol 1-phosphate + H(+)</text>
        <dbReference type="Rhea" id="RHEA:56712"/>
        <dbReference type="Rhea" id="RHEA-COMP:14679"/>
        <dbReference type="Rhea" id="RHEA-COMP:14680"/>
        <dbReference type="ChEBI" id="CHEBI:15378"/>
        <dbReference type="ChEBI" id="CHEBI:29950"/>
        <dbReference type="ChEBI" id="CHEBI:57685"/>
        <dbReference type="ChEBI" id="CHEBI:64716"/>
        <dbReference type="ChEBI" id="CHEBI:140658"/>
        <dbReference type="EC" id="2.5.1.145"/>
    </reaction>
</comment>
<comment type="pathway">
    <text evidence="1">Protein modification; lipoprotein biosynthesis (diacylglyceryl transfer).</text>
</comment>
<comment type="subcellular location">
    <subcellularLocation>
        <location evidence="1">Cell inner membrane</location>
        <topology evidence="1">Multi-pass membrane protein</topology>
    </subcellularLocation>
</comment>
<comment type="similarity">
    <text evidence="1">Belongs to the Lgt family.</text>
</comment>